<name>SELA_CLOPE</name>
<organism>
    <name type="scientific">Clostridium perfringens (strain 13 / Type A)</name>
    <dbReference type="NCBI Taxonomy" id="195102"/>
    <lineage>
        <taxon>Bacteria</taxon>
        <taxon>Bacillati</taxon>
        <taxon>Bacillota</taxon>
        <taxon>Clostridia</taxon>
        <taxon>Eubacteriales</taxon>
        <taxon>Clostridiaceae</taxon>
        <taxon>Clostridium</taxon>
    </lineage>
</organism>
<dbReference type="EC" id="2.9.1.1" evidence="1"/>
<dbReference type="EMBL" id="BA000016">
    <property type="protein sequence ID" value="BAB81823.1"/>
    <property type="molecule type" value="Genomic_DNA"/>
</dbReference>
<dbReference type="RefSeq" id="WP_011010775.1">
    <property type="nucleotide sequence ID" value="NC_003366.1"/>
</dbReference>
<dbReference type="SMR" id="Q8XIK2"/>
<dbReference type="STRING" id="195102.gene:10491387"/>
<dbReference type="KEGG" id="cpe:CPE2117"/>
<dbReference type="HOGENOM" id="CLU_038142_1_0_9"/>
<dbReference type="UniPathway" id="UPA00906">
    <property type="reaction ID" value="UER00896"/>
</dbReference>
<dbReference type="Proteomes" id="UP000000818">
    <property type="component" value="Chromosome"/>
</dbReference>
<dbReference type="GO" id="GO:0005737">
    <property type="term" value="C:cytoplasm"/>
    <property type="evidence" value="ECO:0007669"/>
    <property type="project" value="UniProtKB-SubCell"/>
</dbReference>
<dbReference type="GO" id="GO:0004125">
    <property type="term" value="F:L-seryl-tRNA(Sec) selenium transferase activity"/>
    <property type="evidence" value="ECO:0007669"/>
    <property type="project" value="UniProtKB-UniRule"/>
</dbReference>
<dbReference type="GO" id="GO:0001717">
    <property type="term" value="P:conversion of seryl-tRNAsec to selenocys-tRNAsec"/>
    <property type="evidence" value="ECO:0007669"/>
    <property type="project" value="UniProtKB-UniRule"/>
</dbReference>
<dbReference type="GO" id="GO:0001514">
    <property type="term" value="P:selenocysteine incorporation"/>
    <property type="evidence" value="ECO:0007669"/>
    <property type="project" value="UniProtKB-UniRule"/>
</dbReference>
<dbReference type="Gene3D" id="3.90.1150.180">
    <property type="match status" value="1"/>
</dbReference>
<dbReference type="Gene3D" id="3.40.640.10">
    <property type="entry name" value="Type I PLP-dependent aspartate aminotransferase-like (Major domain)"/>
    <property type="match status" value="1"/>
</dbReference>
<dbReference type="HAMAP" id="MF_00423">
    <property type="entry name" value="SelA"/>
    <property type="match status" value="1"/>
</dbReference>
<dbReference type="InterPro" id="IPR015424">
    <property type="entry name" value="PyrdxlP-dep_Trfase"/>
</dbReference>
<dbReference type="InterPro" id="IPR015421">
    <property type="entry name" value="PyrdxlP-dep_Trfase_major"/>
</dbReference>
<dbReference type="InterPro" id="IPR018319">
    <property type="entry name" value="SelA-like"/>
</dbReference>
<dbReference type="InterPro" id="IPR004534">
    <property type="entry name" value="SelA_trans"/>
</dbReference>
<dbReference type="NCBIfam" id="TIGR00474">
    <property type="entry name" value="selA"/>
    <property type="match status" value="1"/>
</dbReference>
<dbReference type="PANTHER" id="PTHR32328">
    <property type="entry name" value="L-SERYL-TRNA(SEC) SELENIUM TRANSFERASE"/>
    <property type="match status" value="1"/>
</dbReference>
<dbReference type="PANTHER" id="PTHR32328:SF0">
    <property type="entry name" value="L-SERYL-TRNA(SEC) SELENIUM TRANSFERASE"/>
    <property type="match status" value="1"/>
</dbReference>
<dbReference type="Pfam" id="PF03841">
    <property type="entry name" value="SelA"/>
    <property type="match status" value="1"/>
</dbReference>
<dbReference type="SUPFAM" id="SSF53383">
    <property type="entry name" value="PLP-dependent transferases"/>
    <property type="match status" value="1"/>
</dbReference>
<keyword id="KW-0963">Cytoplasm</keyword>
<keyword id="KW-0648">Protein biosynthesis</keyword>
<keyword id="KW-0663">Pyridoxal phosphate</keyword>
<keyword id="KW-1185">Reference proteome</keyword>
<keyword id="KW-0711">Selenium</keyword>
<keyword id="KW-0808">Transferase</keyword>
<accession>Q8XIK2</accession>
<proteinExistence type="inferred from homology"/>
<sequence>MTKELLRALPKIDEILGIFNEDFLNENGRETIVSALRDIINENRKAILNEEVDYALTKEEAKSKCEHRLLKKRERNLKRVINGTGVVIHTNLGRSLLSKEATEAVALAASSYSNLEYDLEKGERGSRYSLIEGIIKDITGAEAALVVNNNAAAIMLVLNSLCENKEVIVSRGELVEIGGSFRIPEVMNFSRAKLVEVGTTNRTHLYDYEDAITEETGAFLKVHSSNFKIVGFTKSVSANDICNLAKEKGIPVIEDIGSGVLIDLSKYGLEKEPTVIESLESGVDIVTFSGDKMLGGAQAGIIVGKKKFIDKIKKNQLTRALRVDKFTLAALEITLKHYLNEKEAIEKIPTLYMMTLDLNEIKERANRLYKNLEGLNKFYKFSIEEGESTVGGGSMPDSKLSTYLLRIDSDRINEVNLERELREYKIPIITRVYKGAVYIDLRTILEDDYEVIFNALKEIGEK</sequence>
<protein>
    <recommendedName>
        <fullName evidence="1">L-seryl-tRNA(Sec) selenium transferase</fullName>
        <ecNumber evidence="1">2.9.1.1</ecNumber>
    </recommendedName>
    <alternativeName>
        <fullName evidence="1">Selenocysteine synthase</fullName>
        <shortName evidence="1">Sec synthase</shortName>
    </alternativeName>
    <alternativeName>
        <fullName evidence="1">Selenocysteinyl-tRNA(Sec) synthase</fullName>
    </alternativeName>
</protein>
<feature type="chain" id="PRO_0000189596" description="L-seryl-tRNA(Sec) selenium transferase">
    <location>
        <begin position="1"/>
        <end position="462"/>
    </location>
</feature>
<feature type="modified residue" description="N6-(pyridoxal phosphate)lysine" evidence="1">
    <location>
        <position position="292"/>
    </location>
</feature>
<evidence type="ECO:0000255" key="1">
    <source>
        <dbReference type="HAMAP-Rule" id="MF_00423"/>
    </source>
</evidence>
<reference key="1">
    <citation type="journal article" date="2002" name="Proc. Natl. Acad. Sci. U.S.A.">
        <title>Complete genome sequence of Clostridium perfringens, an anaerobic flesh-eater.</title>
        <authorList>
            <person name="Shimizu T."/>
            <person name="Ohtani K."/>
            <person name="Hirakawa H."/>
            <person name="Ohshima K."/>
            <person name="Yamashita A."/>
            <person name="Shiba T."/>
            <person name="Ogasawara N."/>
            <person name="Hattori M."/>
            <person name="Kuhara S."/>
            <person name="Hayashi H."/>
        </authorList>
    </citation>
    <scope>NUCLEOTIDE SEQUENCE [LARGE SCALE GENOMIC DNA]</scope>
    <source>
        <strain>13 / Type A</strain>
    </source>
</reference>
<gene>
    <name evidence="1" type="primary">selA</name>
    <name type="ordered locus">CPE2117</name>
</gene>
<comment type="function">
    <text evidence="1">Converts seryl-tRNA(Sec) to selenocysteinyl-tRNA(Sec) required for selenoprotein biosynthesis.</text>
</comment>
<comment type="catalytic activity">
    <reaction evidence="1">
        <text>L-seryl-tRNA(Sec) + selenophosphate + H(+) = L-selenocysteinyl-tRNA(Sec) + phosphate</text>
        <dbReference type="Rhea" id="RHEA:22728"/>
        <dbReference type="Rhea" id="RHEA-COMP:9742"/>
        <dbReference type="Rhea" id="RHEA-COMP:9743"/>
        <dbReference type="ChEBI" id="CHEBI:15378"/>
        <dbReference type="ChEBI" id="CHEBI:16144"/>
        <dbReference type="ChEBI" id="CHEBI:43474"/>
        <dbReference type="ChEBI" id="CHEBI:78533"/>
        <dbReference type="ChEBI" id="CHEBI:78573"/>
        <dbReference type="EC" id="2.9.1.1"/>
    </reaction>
</comment>
<comment type="cofactor">
    <cofactor evidence="1">
        <name>pyridoxal 5'-phosphate</name>
        <dbReference type="ChEBI" id="CHEBI:597326"/>
    </cofactor>
</comment>
<comment type="pathway">
    <text evidence="1">Aminoacyl-tRNA biosynthesis; selenocysteinyl-tRNA(Sec) biosynthesis; selenocysteinyl-tRNA(Sec) from L-seryl-tRNA(Sec) (bacterial route): step 1/1.</text>
</comment>
<comment type="subcellular location">
    <subcellularLocation>
        <location evidence="1">Cytoplasm</location>
    </subcellularLocation>
</comment>
<comment type="similarity">
    <text evidence="1">Belongs to the SelA family.</text>
</comment>